<organism>
    <name type="scientific">Homo sapiens</name>
    <name type="common">Human</name>
    <dbReference type="NCBI Taxonomy" id="9606"/>
    <lineage>
        <taxon>Eukaryota</taxon>
        <taxon>Metazoa</taxon>
        <taxon>Chordata</taxon>
        <taxon>Craniata</taxon>
        <taxon>Vertebrata</taxon>
        <taxon>Euteleostomi</taxon>
        <taxon>Mammalia</taxon>
        <taxon>Eutheria</taxon>
        <taxon>Euarchontoglires</taxon>
        <taxon>Primates</taxon>
        <taxon>Haplorrhini</taxon>
        <taxon>Catarrhini</taxon>
        <taxon>Hominidae</taxon>
        <taxon>Homo</taxon>
    </lineage>
</organism>
<evidence type="ECO:0000250" key="1">
    <source>
        <dbReference type="UniProtKB" id="P45548"/>
    </source>
</evidence>
<evidence type="ECO:0000250" key="2">
    <source>
        <dbReference type="UniProtKB" id="Q60866"/>
    </source>
</evidence>
<evidence type="ECO:0000255" key="3">
    <source>
        <dbReference type="PROSITE-ProRule" id="PRU00679"/>
    </source>
</evidence>
<evidence type="ECO:0000269" key="4">
    <source>
    </source>
</evidence>
<evidence type="ECO:0000303" key="5">
    <source>
    </source>
</evidence>
<evidence type="ECO:0000305" key="6"/>
<evidence type="ECO:0000305" key="7">
    <source>
    </source>
</evidence>
<evidence type="ECO:0000312" key="8">
    <source>
        <dbReference type="HGNC" id="HGNC:9590"/>
    </source>
</evidence>
<proteinExistence type="evidence at protein level"/>
<sequence>MSSLSGKVQTVLGLVEPSKLGRTLTHEHLAMTFDCCYCPPPPCQEAISKEPIVMKNLYWIQKNAYSHKENLQLNQETEAIKEELLYFKANGGGALVENTTTGISRDTQTLKRLAEETGVHIISGAGFYVDATHSSETRAMSVEQLTDVLMNEILHGADGTSIKCGIIGEIGCSWPLTESERKVLQATAHAQAQLGCPVIIHPGRSSRAPFQIIRILQEAGADISKTVMSHLDRTILDKKELLEFAQLGCYLEYDLFGTELLHYQLGPDIDMPDDNKRIRRVRLLVEEGCEDRILVAHDIHTKTRLMKYGGHGYSHILTNVVPKMLLRGITENVLDKILIENPKQWLTFK</sequence>
<gene>
    <name evidence="5 8" type="primary">PTER</name>
</gene>
<comment type="function">
    <text evidence="2 4">N-acetyltaurine hydrolase that regulates feeding by catalyzing the hydrolysis of N-acetyltaurine into taurine and acetate (PubMed:39112712). N-acetyltaurine has anorexigenic and anti-obesity effects that are dependent on GFRAL receptor and GDF15 (By similarity). PTER also acts on other N-acetyl amino acids (Met, Ile, Leu, Val) and N-propionyltaurine, but at lower rates (By similarity).</text>
</comment>
<comment type="catalytic activity">
    <reaction evidence="7">
        <text>N-acetyltaurine + H2O = taurine + acetate</text>
        <dbReference type="Rhea" id="RHEA:81107"/>
        <dbReference type="ChEBI" id="CHEBI:15377"/>
        <dbReference type="ChEBI" id="CHEBI:30089"/>
        <dbReference type="ChEBI" id="CHEBI:133737"/>
        <dbReference type="ChEBI" id="CHEBI:507393"/>
    </reaction>
    <physiologicalReaction direction="left-to-right" evidence="7">
        <dbReference type="Rhea" id="RHEA:81108"/>
    </physiologicalReaction>
</comment>
<comment type="catalytic activity">
    <reaction evidence="2">
        <text>N-propanoyltaurine + H2O = propanoate + taurine</text>
        <dbReference type="Rhea" id="RHEA:81111"/>
        <dbReference type="ChEBI" id="CHEBI:15377"/>
        <dbReference type="ChEBI" id="CHEBI:17272"/>
        <dbReference type="ChEBI" id="CHEBI:231795"/>
        <dbReference type="ChEBI" id="CHEBI:507393"/>
    </reaction>
    <physiologicalReaction direction="left-to-right" evidence="2">
        <dbReference type="Rhea" id="RHEA:81112"/>
    </physiologicalReaction>
</comment>
<comment type="catalytic activity">
    <reaction evidence="2">
        <text>N-acetyl-L-methionine + H2O = L-methionine + acetate</text>
        <dbReference type="Rhea" id="RHEA:67440"/>
        <dbReference type="ChEBI" id="CHEBI:15377"/>
        <dbReference type="ChEBI" id="CHEBI:30089"/>
        <dbReference type="ChEBI" id="CHEBI:57844"/>
        <dbReference type="ChEBI" id="CHEBI:71670"/>
    </reaction>
    <physiologicalReaction direction="left-to-right" evidence="2">
        <dbReference type="Rhea" id="RHEA:67441"/>
    </physiologicalReaction>
</comment>
<comment type="catalytic activity">
    <reaction evidence="2">
        <text>N-acetyl-L-isoleucine + H2O = L-isoleucine + acetate</text>
        <dbReference type="Rhea" id="RHEA:81119"/>
        <dbReference type="ChEBI" id="CHEBI:15377"/>
        <dbReference type="ChEBI" id="CHEBI:30089"/>
        <dbReference type="ChEBI" id="CHEBI:58045"/>
        <dbReference type="ChEBI" id="CHEBI:133735"/>
    </reaction>
    <physiologicalReaction direction="left-to-right" evidence="2">
        <dbReference type="Rhea" id="RHEA:81120"/>
    </physiologicalReaction>
</comment>
<comment type="catalytic activity">
    <reaction evidence="2">
        <text>N-acetyl-L-leucine + H2O = L-leucine + acetate</text>
        <dbReference type="Rhea" id="RHEA:81115"/>
        <dbReference type="ChEBI" id="CHEBI:15377"/>
        <dbReference type="ChEBI" id="CHEBI:30089"/>
        <dbReference type="ChEBI" id="CHEBI:57427"/>
        <dbReference type="ChEBI" id="CHEBI:58270"/>
    </reaction>
    <physiologicalReaction direction="left-to-right" evidence="2">
        <dbReference type="Rhea" id="RHEA:81116"/>
    </physiologicalReaction>
</comment>
<comment type="catalytic activity">
    <reaction evidence="2">
        <text>N-acetyl-L-valine + H2O = L-valine + acetate</text>
        <dbReference type="Rhea" id="RHEA:81123"/>
        <dbReference type="ChEBI" id="CHEBI:15377"/>
        <dbReference type="ChEBI" id="CHEBI:30089"/>
        <dbReference type="ChEBI" id="CHEBI:57762"/>
        <dbReference type="ChEBI" id="CHEBI:133716"/>
    </reaction>
    <physiologicalReaction direction="left-to-right" evidence="2">
        <dbReference type="Rhea" id="RHEA:81124"/>
    </physiologicalReaction>
</comment>
<comment type="cofactor">
    <cofactor evidence="1">
        <name>a divalent metal cation</name>
        <dbReference type="ChEBI" id="CHEBI:60240"/>
    </cofactor>
    <text evidence="1">Binds 2 divalent metal cations per subunit.</text>
</comment>
<comment type="interaction">
    <interactant intactId="EBI-4291023">
        <id>Q96BW5</id>
    </interactant>
    <interactant intactId="EBI-19954058">
        <id>O15499</id>
        <label>GSC2</label>
    </interactant>
    <organismsDiffer>false</organismsDiffer>
    <experiments>3</experiments>
</comment>
<comment type="subcellular location">
    <subcellularLocation>
        <location evidence="2">Cytoplasm</location>
        <location evidence="2">Cytosol</location>
    </subcellularLocation>
</comment>
<comment type="alternative products">
    <event type="alternative splicing"/>
    <isoform>
        <id>Q96BW5-1</id>
        <name>1</name>
        <sequence type="displayed"/>
    </isoform>
    <isoform>
        <id>Q96BW5-2</id>
        <name>2</name>
        <sequence type="described" ref="VSP_038342"/>
    </isoform>
</comment>
<comment type="similarity">
    <text evidence="3">Belongs to the metallo-dependent hydrolases superfamily. Phosphotriesterase family.</text>
</comment>
<dbReference type="EC" id="3.1.-.-" evidence="7"/>
<dbReference type="EMBL" id="AF212237">
    <property type="protein sequence ID" value="AAK14923.1"/>
    <property type="molecule type" value="mRNA"/>
</dbReference>
<dbReference type="EMBL" id="AK095486">
    <property type="protein sequence ID" value="BAG53067.1"/>
    <property type="molecule type" value="mRNA"/>
</dbReference>
<dbReference type="EMBL" id="AK314910">
    <property type="protein sequence ID" value="BAG37422.1"/>
    <property type="molecule type" value="mRNA"/>
</dbReference>
<dbReference type="EMBL" id="EF445015">
    <property type="protein sequence ID" value="ACA06055.1"/>
    <property type="molecule type" value="Genomic_DNA"/>
</dbReference>
<dbReference type="EMBL" id="EF445015">
    <property type="protein sequence ID" value="ACA06056.1"/>
    <property type="molecule type" value="Genomic_DNA"/>
</dbReference>
<dbReference type="EMBL" id="EF445015">
    <property type="protein sequence ID" value="ACA06057.1"/>
    <property type="molecule type" value="Genomic_DNA"/>
</dbReference>
<dbReference type="EMBL" id="AL360230">
    <property type="status" value="NOT_ANNOTATED_CDS"/>
    <property type="molecule type" value="Genomic_DNA"/>
</dbReference>
<dbReference type="EMBL" id="CH471072">
    <property type="protein sequence ID" value="EAW86226.1"/>
    <property type="molecule type" value="Genomic_DNA"/>
</dbReference>
<dbReference type="EMBL" id="CH471072">
    <property type="protein sequence ID" value="EAW86229.1"/>
    <property type="molecule type" value="Genomic_DNA"/>
</dbReference>
<dbReference type="EMBL" id="CH471072">
    <property type="protein sequence ID" value="EAW86227.1"/>
    <property type="molecule type" value="Genomic_DNA"/>
</dbReference>
<dbReference type="EMBL" id="CH471072">
    <property type="protein sequence ID" value="EAW86228.1"/>
    <property type="molecule type" value="Genomic_DNA"/>
</dbReference>
<dbReference type="EMBL" id="CH471072">
    <property type="protein sequence ID" value="EAW86230.1"/>
    <property type="molecule type" value="Genomic_DNA"/>
</dbReference>
<dbReference type="EMBL" id="BC015092">
    <property type="protein sequence ID" value="AAH15092.1"/>
    <property type="molecule type" value="mRNA"/>
</dbReference>
<dbReference type="EMBL" id="BC050411">
    <property type="protein sequence ID" value="AAH50411.1"/>
    <property type="molecule type" value="mRNA"/>
</dbReference>
<dbReference type="CCDS" id="CCDS58070.1">
    <molecule id="Q96BW5-2"/>
</dbReference>
<dbReference type="CCDS" id="CCDS7111.1">
    <molecule id="Q96BW5-1"/>
</dbReference>
<dbReference type="RefSeq" id="NP_001001484.1">
    <molecule id="Q96BW5-1"/>
    <property type="nucleotide sequence ID" value="NM_001001484.3"/>
</dbReference>
<dbReference type="RefSeq" id="NP_001248765.1">
    <molecule id="Q96BW5-1"/>
    <property type="nucleotide sequence ID" value="NM_001261836.2"/>
</dbReference>
<dbReference type="RefSeq" id="NP_001248766.1">
    <molecule id="Q96BW5-2"/>
    <property type="nucleotide sequence ID" value="NM_001261837.2"/>
</dbReference>
<dbReference type="RefSeq" id="NP_001248767.1">
    <property type="nucleotide sequence ID" value="NM_001261838.1"/>
</dbReference>
<dbReference type="RefSeq" id="NP_109589.2">
    <molecule id="Q96BW5-1"/>
    <property type="nucleotide sequence ID" value="NM_030664.4"/>
</dbReference>
<dbReference type="RefSeq" id="XP_016872418.1">
    <molecule id="Q96BW5-2"/>
    <property type="nucleotide sequence ID" value="XM_017016929.3"/>
</dbReference>
<dbReference type="RefSeq" id="XP_016872419.1">
    <property type="nucleotide sequence ID" value="XM_017016930.1"/>
</dbReference>
<dbReference type="RefSeq" id="XP_054223147.1">
    <molecule id="Q96BW5-2"/>
    <property type="nucleotide sequence ID" value="XM_054367172.1"/>
</dbReference>
<dbReference type="SMR" id="Q96BW5"/>
<dbReference type="BioGRID" id="114728">
    <property type="interactions" value="40"/>
</dbReference>
<dbReference type="FunCoup" id="Q96BW5">
    <property type="interactions" value="235"/>
</dbReference>
<dbReference type="IntAct" id="Q96BW5">
    <property type="interactions" value="29"/>
</dbReference>
<dbReference type="MINT" id="Q96BW5"/>
<dbReference type="STRING" id="9606.ENSP00000367239"/>
<dbReference type="GlyGen" id="Q96BW5">
    <property type="glycosylation" value="1 site, 1 O-linked glycan (1 site)"/>
</dbReference>
<dbReference type="iPTMnet" id="Q96BW5"/>
<dbReference type="PhosphoSitePlus" id="Q96BW5"/>
<dbReference type="BioMuta" id="PTER"/>
<dbReference type="DMDM" id="32171701"/>
<dbReference type="jPOST" id="Q96BW5"/>
<dbReference type="MassIVE" id="Q96BW5"/>
<dbReference type="PaxDb" id="9606-ENSP00000367239"/>
<dbReference type="PeptideAtlas" id="Q96BW5"/>
<dbReference type="ProteomicsDB" id="76122">
    <molecule id="Q96BW5-1"/>
</dbReference>
<dbReference type="ProteomicsDB" id="76123">
    <molecule id="Q96BW5-2"/>
</dbReference>
<dbReference type="Pumba" id="Q96BW5"/>
<dbReference type="Antibodypedia" id="25152">
    <property type="antibodies" value="115 antibodies from 27 providers"/>
</dbReference>
<dbReference type="DNASU" id="9317"/>
<dbReference type="Ensembl" id="ENST00000298942.4">
    <molecule id="Q96BW5-2"/>
    <property type="protein sequence ID" value="ENSP00000298942.4"/>
    <property type="gene ID" value="ENSG00000165983.15"/>
</dbReference>
<dbReference type="Ensembl" id="ENST00000378000.5">
    <molecule id="Q96BW5-1"/>
    <property type="protein sequence ID" value="ENSP00000367239.1"/>
    <property type="gene ID" value="ENSG00000165983.15"/>
</dbReference>
<dbReference type="Ensembl" id="ENST00000535784.7">
    <molecule id="Q96BW5-1"/>
    <property type="protein sequence ID" value="ENSP00000439485.1"/>
    <property type="gene ID" value="ENSG00000165983.15"/>
</dbReference>
<dbReference type="GeneID" id="9317"/>
<dbReference type="KEGG" id="hsa:9317"/>
<dbReference type="MANE-Select" id="ENST00000535784.7">
    <property type="protein sequence ID" value="ENSP00000439485.1"/>
    <property type="RefSeq nucleotide sequence ID" value="NM_001261836.2"/>
    <property type="RefSeq protein sequence ID" value="NP_001248765.1"/>
</dbReference>
<dbReference type="UCSC" id="uc001ioh.3">
    <molecule id="Q96BW5-1"/>
    <property type="organism name" value="human"/>
</dbReference>
<dbReference type="AGR" id="HGNC:9590"/>
<dbReference type="CTD" id="9317"/>
<dbReference type="DisGeNET" id="9317"/>
<dbReference type="GeneCards" id="PTER"/>
<dbReference type="HGNC" id="HGNC:9590">
    <property type="gene designation" value="PTER"/>
</dbReference>
<dbReference type="HPA" id="ENSG00000165983">
    <property type="expression patterns" value="Tissue enhanced (brain)"/>
</dbReference>
<dbReference type="MIM" id="604446">
    <property type="type" value="gene"/>
</dbReference>
<dbReference type="neXtProt" id="NX_Q96BW5"/>
<dbReference type="OpenTargets" id="ENSG00000165983"/>
<dbReference type="PharmGKB" id="PA33944"/>
<dbReference type="VEuPathDB" id="HostDB:ENSG00000165983"/>
<dbReference type="eggNOG" id="ENOG502QQQR">
    <property type="taxonomic scope" value="Eukaryota"/>
</dbReference>
<dbReference type="GeneTree" id="ENSGT00390000006960"/>
<dbReference type="HOGENOM" id="CLU_054760_0_1_1"/>
<dbReference type="InParanoid" id="Q96BW5"/>
<dbReference type="OMA" id="MVKCGFI"/>
<dbReference type="OrthoDB" id="9998343at2759"/>
<dbReference type="PAN-GO" id="Q96BW5">
    <property type="GO annotations" value="0 GO annotations based on evolutionary models"/>
</dbReference>
<dbReference type="PhylomeDB" id="Q96BW5"/>
<dbReference type="TreeFam" id="TF323205"/>
<dbReference type="PathwayCommons" id="Q96BW5"/>
<dbReference type="SignaLink" id="Q96BW5"/>
<dbReference type="BioGRID-ORCS" id="9317">
    <property type="hits" value="11 hits in 1155 CRISPR screens"/>
</dbReference>
<dbReference type="ChiTaRS" id="PTER">
    <property type="organism name" value="human"/>
</dbReference>
<dbReference type="GenomeRNAi" id="9317"/>
<dbReference type="Pharos" id="Q96BW5">
    <property type="development level" value="Tbio"/>
</dbReference>
<dbReference type="PRO" id="PR:Q96BW5"/>
<dbReference type="Proteomes" id="UP000005640">
    <property type="component" value="Chromosome 10"/>
</dbReference>
<dbReference type="RNAct" id="Q96BW5">
    <property type="molecule type" value="protein"/>
</dbReference>
<dbReference type="Bgee" id="ENSG00000165983">
    <property type="expression patterns" value="Expressed in anterior cingulate cortex and 178 other cell types or tissues"/>
</dbReference>
<dbReference type="ExpressionAtlas" id="Q96BW5">
    <property type="expression patterns" value="baseline and differential"/>
</dbReference>
<dbReference type="GO" id="GO:0005829">
    <property type="term" value="C:cytosol"/>
    <property type="evidence" value="ECO:0000250"/>
    <property type="project" value="UniProtKB"/>
</dbReference>
<dbReference type="GO" id="GO:0070062">
    <property type="term" value="C:extracellular exosome"/>
    <property type="evidence" value="ECO:0007005"/>
    <property type="project" value="UniProtKB"/>
</dbReference>
<dbReference type="GO" id="GO:0141215">
    <property type="term" value="F:N-acetyltaurine hydrolase activity"/>
    <property type="evidence" value="ECO:0000314"/>
    <property type="project" value="UniProtKB"/>
</dbReference>
<dbReference type="GO" id="GO:0008270">
    <property type="term" value="F:zinc ion binding"/>
    <property type="evidence" value="ECO:0007669"/>
    <property type="project" value="InterPro"/>
</dbReference>
<dbReference type="GO" id="GO:0009056">
    <property type="term" value="P:catabolic process"/>
    <property type="evidence" value="ECO:0007669"/>
    <property type="project" value="InterPro"/>
</dbReference>
<dbReference type="GO" id="GO:0030855">
    <property type="term" value="P:epithelial cell differentiation"/>
    <property type="evidence" value="ECO:0000270"/>
    <property type="project" value="UniProtKB"/>
</dbReference>
<dbReference type="GO" id="GO:0032098">
    <property type="term" value="P:regulation of appetite"/>
    <property type="evidence" value="ECO:0000250"/>
    <property type="project" value="UniProtKB"/>
</dbReference>
<dbReference type="GO" id="GO:0019530">
    <property type="term" value="P:taurine metabolic process"/>
    <property type="evidence" value="ECO:0000314"/>
    <property type="project" value="UniProtKB"/>
</dbReference>
<dbReference type="CDD" id="cd00530">
    <property type="entry name" value="PTE"/>
    <property type="match status" value="1"/>
</dbReference>
<dbReference type="FunFam" id="3.20.20.140:FF:000058">
    <property type="entry name" value="Phosphotriesterase-related protein"/>
    <property type="match status" value="1"/>
</dbReference>
<dbReference type="Gene3D" id="3.20.20.140">
    <property type="entry name" value="Metal-dependent hydrolases"/>
    <property type="match status" value="1"/>
</dbReference>
<dbReference type="InterPro" id="IPR017947">
    <property type="entry name" value="AryldialkylPase_Zn-BS"/>
</dbReference>
<dbReference type="InterPro" id="IPR032466">
    <property type="entry name" value="Metal_Hydrolase"/>
</dbReference>
<dbReference type="InterPro" id="IPR001559">
    <property type="entry name" value="Phosphotriesterase"/>
</dbReference>
<dbReference type="PANTHER" id="PTHR10819">
    <property type="entry name" value="PHOSPHOTRIESTERASE-RELATED"/>
    <property type="match status" value="1"/>
</dbReference>
<dbReference type="PANTHER" id="PTHR10819:SF3">
    <property type="entry name" value="PHOSPHOTRIESTERASE-RELATED PROTEIN"/>
    <property type="match status" value="1"/>
</dbReference>
<dbReference type="Pfam" id="PF02126">
    <property type="entry name" value="PTE"/>
    <property type="match status" value="1"/>
</dbReference>
<dbReference type="SUPFAM" id="SSF51556">
    <property type="entry name" value="Metallo-dependent hydrolases"/>
    <property type="match status" value="1"/>
</dbReference>
<dbReference type="PROSITE" id="PS01322">
    <property type="entry name" value="PHOSPHOTRIESTERASE_1"/>
    <property type="match status" value="1"/>
</dbReference>
<dbReference type="PROSITE" id="PS51347">
    <property type="entry name" value="PHOSPHOTRIESTERASE_2"/>
    <property type="match status" value="1"/>
</dbReference>
<feature type="chain" id="PRO_0000205364" description="N-acetyltaurine hydrolase">
    <location>
        <begin position="1"/>
        <end position="349"/>
    </location>
</feature>
<feature type="binding site" evidence="1">
    <location>
        <position position="26"/>
    </location>
    <ligand>
        <name>a divalent metal cation</name>
        <dbReference type="ChEBI" id="CHEBI:60240"/>
        <label>1</label>
    </ligand>
</feature>
<feature type="binding site" evidence="1">
    <location>
        <position position="28"/>
    </location>
    <ligand>
        <name>a divalent metal cation</name>
        <dbReference type="ChEBI" id="CHEBI:60240"/>
        <label>1</label>
    </ligand>
</feature>
<feature type="binding site" evidence="1">
    <location>
        <position position="169"/>
    </location>
    <ligand>
        <name>a divalent metal cation</name>
        <dbReference type="ChEBI" id="CHEBI:60240"/>
        <label>1</label>
    </ligand>
</feature>
<feature type="binding site" evidence="1">
    <location>
        <position position="169"/>
    </location>
    <ligand>
        <name>a divalent metal cation</name>
        <dbReference type="ChEBI" id="CHEBI:60240"/>
        <label>2</label>
    </ligand>
</feature>
<feature type="binding site" evidence="1">
    <location>
        <position position="201"/>
    </location>
    <ligand>
        <name>a divalent metal cation</name>
        <dbReference type="ChEBI" id="CHEBI:60240"/>
        <label>2</label>
    </ligand>
</feature>
<feature type="binding site" evidence="1">
    <location>
        <position position="230"/>
    </location>
    <ligand>
        <name>a divalent metal cation</name>
        <dbReference type="ChEBI" id="CHEBI:60240"/>
        <label>2</label>
    </ligand>
</feature>
<feature type="binding site" evidence="1">
    <location>
        <position position="298"/>
    </location>
    <ligand>
        <name>a divalent metal cation</name>
        <dbReference type="ChEBI" id="CHEBI:60240"/>
        <label>1</label>
    </ligand>
</feature>
<feature type="splice variant" id="VSP_038342" description="In isoform 2." evidence="6">
    <location>
        <begin position="234"/>
        <end position="280"/>
    </location>
</feature>
<feature type="sequence variant" id="VAR_051610" description="In dbSNP:rs36023740.">
    <original>E</original>
    <variation>G</variation>
    <location>
        <position position="97"/>
    </location>
</feature>
<feature type="sequence conflict" description="In Ref. 1; AAK14923." evidence="6" ref="1">
    <original>T</original>
    <variation>A</variation>
    <location>
        <position position="234"/>
    </location>
</feature>
<feature type="sequence conflict" description="In Ref. 1; AAK14923." evidence="6" ref="1">
    <original>E</original>
    <variation>D</variation>
    <location>
        <position position="259"/>
    </location>
</feature>
<protein>
    <recommendedName>
        <fullName evidence="5">N-acetyltaurine hydrolase</fullName>
        <ecNumber evidence="7">3.1.-.-</ecNumber>
    </recommendedName>
    <alternativeName>
        <fullName evidence="5">Phosphotriesterase-related protein</fullName>
    </alternativeName>
</protein>
<accession>Q96BW5</accession>
<accession>B0YJ77</accession>
<accession>B3KTF5</accession>
<accession>D3DRU0</accession>
<accession>Q9BY46</accession>
<keyword id="KW-0025">Alternative splicing</keyword>
<keyword id="KW-0963">Cytoplasm</keyword>
<keyword id="KW-0378">Hydrolase</keyword>
<keyword id="KW-0479">Metal-binding</keyword>
<keyword id="KW-1267">Proteomics identification</keyword>
<keyword id="KW-1185">Reference proteome</keyword>
<reference key="1">
    <citation type="submission" date="1999-12" db="EMBL/GenBank/DDBJ databases">
        <title>A novel gene expressed in human liver non-tumor tissues.</title>
        <authorList>
            <person name="Li Y."/>
            <person name="Wu T."/>
            <person name="Xu S."/>
            <person name="Ren S."/>
            <person name="Chen Z."/>
            <person name="Han Z."/>
        </authorList>
    </citation>
    <scope>NUCLEOTIDE SEQUENCE [LARGE SCALE MRNA] (ISOFORM 1)</scope>
    <source>
        <tissue>Liver</tissue>
    </source>
</reference>
<reference key="2">
    <citation type="journal article" date="2004" name="Nat. Genet.">
        <title>Complete sequencing and characterization of 21,243 full-length human cDNAs.</title>
        <authorList>
            <person name="Ota T."/>
            <person name="Suzuki Y."/>
            <person name="Nishikawa T."/>
            <person name="Otsuki T."/>
            <person name="Sugiyama T."/>
            <person name="Irie R."/>
            <person name="Wakamatsu A."/>
            <person name="Hayashi K."/>
            <person name="Sato H."/>
            <person name="Nagai K."/>
            <person name="Kimura K."/>
            <person name="Makita H."/>
            <person name="Sekine M."/>
            <person name="Obayashi M."/>
            <person name="Nishi T."/>
            <person name="Shibahara T."/>
            <person name="Tanaka T."/>
            <person name="Ishii S."/>
            <person name="Yamamoto J."/>
            <person name="Saito K."/>
            <person name="Kawai Y."/>
            <person name="Isono Y."/>
            <person name="Nakamura Y."/>
            <person name="Nagahari K."/>
            <person name="Murakami K."/>
            <person name="Yasuda T."/>
            <person name="Iwayanagi T."/>
            <person name="Wagatsuma M."/>
            <person name="Shiratori A."/>
            <person name="Sudo H."/>
            <person name="Hosoiri T."/>
            <person name="Kaku Y."/>
            <person name="Kodaira H."/>
            <person name="Kondo H."/>
            <person name="Sugawara M."/>
            <person name="Takahashi M."/>
            <person name="Kanda K."/>
            <person name="Yokoi T."/>
            <person name="Furuya T."/>
            <person name="Kikkawa E."/>
            <person name="Omura Y."/>
            <person name="Abe K."/>
            <person name="Kamihara K."/>
            <person name="Katsuta N."/>
            <person name="Sato K."/>
            <person name="Tanikawa M."/>
            <person name="Yamazaki M."/>
            <person name="Ninomiya K."/>
            <person name="Ishibashi T."/>
            <person name="Yamashita H."/>
            <person name="Murakawa K."/>
            <person name="Fujimori K."/>
            <person name="Tanai H."/>
            <person name="Kimata M."/>
            <person name="Watanabe M."/>
            <person name="Hiraoka S."/>
            <person name="Chiba Y."/>
            <person name="Ishida S."/>
            <person name="Ono Y."/>
            <person name="Takiguchi S."/>
            <person name="Watanabe S."/>
            <person name="Yosida M."/>
            <person name="Hotuta T."/>
            <person name="Kusano J."/>
            <person name="Kanehori K."/>
            <person name="Takahashi-Fujii A."/>
            <person name="Hara H."/>
            <person name="Tanase T.-O."/>
            <person name="Nomura Y."/>
            <person name="Togiya S."/>
            <person name="Komai F."/>
            <person name="Hara R."/>
            <person name="Takeuchi K."/>
            <person name="Arita M."/>
            <person name="Imose N."/>
            <person name="Musashino K."/>
            <person name="Yuuki H."/>
            <person name="Oshima A."/>
            <person name="Sasaki N."/>
            <person name="Aotsuka S."/>
            <person name="Yoshikawa Y."/>
            <person name="Matsunawa H."/>
            <person name="Ichihara T."/>
            <person name="Shiohata N."/>
            <person name="Sano S."/>
            <person name="Moriya S."/>
            <person name="Momiyama H."/>
            <person name="Satoh N."/>
            <person name="Takami S."/>
            <person name="Terashima Y."/>
            <person name="Suzuki O."/>
            <person name="Nakagawa S."/>
            <person name="Senoh A."/>
            <person name="Mizoguchi H."/>
            <person name="Goto Y."/>
            <person name="Shimizu F."/>
            <person name="Wakebe H."/>
            <person name="Hishigaki H."/>
            <person name="Watanabe T."/>
            <person name="Sugiyama A."/>
            <person name="Takemoto M."/>
            <person name="Kawakami B."/>
            <person name="Yamazaki M."/>
            <person name="Watanabe K."/>
            <person name="Kumagai A."/>
            <person name="Itakura S."/>
            <person name="Fukuzumi Y."/>
            <person name="Fujimori Y."/>
            <person name="Komiyama M."/>
            <person name="Tashiro H."/>
            <person name="Tanigami A."/>
            <person name="Fujiwara T."/>
            <person name="Ono T."/>
            <person name="Yamada K."/>
            <person name="Fujii Y."/>
            <person name="Ozaki K."/>
            <person name="Hirao M."/>
            <person name="Ohmori Y."/>
            <person name="Kawabata A."/>
            <person name="Hikiji T."/>
            <person name="Kobatake N."/>
            <person name="Inagaki H."/>
            <person name="Ikema Y."/>
            <person name="Okamoto S."/>
            <person name="Okitani R."/>
            <person name="Kawakami T."/>
            <person name="Noguchi S."/>
            <person name="Itoh T."/>
            <person name="Shigeta K."/>
            <person name="Senba T."/>
            <person name="Matsumura K."/>
            <person name="Nakajima Y."/>
            <person name="Mizuno T."/>
            <person name="Morinaga M."/>
            <person name="Sasaki M."/>
            <person name="Togashi T."/>
            <person name="Oyama M."/>
            <person name="Hata H."/>
            <person name="Watanabe M."/>
            <person name="Komatsu T."/>
            <person name="Mizushima-Sugano J."/>
            <person name="Satoh T."/>
            <person name="Shirai Y."/>
            <person name="Takahashi Y."/>
            <person name="Nakagawa K."/>
            <person name="Okumura K."/>
            <person name="Nagase T."/>
            <person name="Nomura N."/>
            <person name="Kikuchi H."/>
            <person name="Masuho Y."/>
            <person name="Yamashita R."/>
            <person name="Nakai K."/>
            <person name="Yada T."/>
            <person name="Nakamura Y."/>
            <person name="Ohara O."/>
            <person name="Isogai T."/>
            <person name="Sugano S."/>
        </authorList>
    </citation>
    <scope>NUCLEOTIDE SEQUENCE [LARGE SCALE MRNA] (ISOFORM 1)</scope>
    <source>
        <tissue>Amygdala</tissue>
    </source>
</reference>
<reference key="3">
    <citation type="submission" date="2007-02" db="EMBL/GenBank/DDBJ databases">
        <authorList>
            <consortium name="NHLBI resequencing and genotyping service (RS&amp;G)"/>
        </authorList>
    </citation>
    <scope>NUCLEOTIDE SEQUENCE [GENOMIC DNA]</scope>
</reference>
<reference key="4">
    <citation type="journal article" date="2004" name="Nature">
        <title>The DNA sequence and comparative analysis of human chromosome 10.</title>
        <authorList>
            <person name="Deloukas P."/>
            <person name="Earthrowl M.E."/>
            <person name="Grafham D.V."/>
            <person name="Rubenfield M."/>
            <person name="French L."/>
            <person name="Steward C.A."/>
            <person name="Sims S.K."/>
            <person name="Jones M.C."/>
            <person name="Searle S."/>
            <person name="Scott C."/>
            <person name="Howe K."/>
            <person name="Hunt S.E."/>
            <person name="Andrews T.D."/>
            <person name="Gilbert J.G.R."/>
            <person name="Swarbreck D."/>
            <person name="Ashurst J.L."/>
            <person name="Taylor A."/>
            <person name="Battles J."/>
            <person name="Bird C.P."/>
            <person name="Ainscough R."/>
            <person name="Almeida J.P."/>
            <person name="Ashwell R.I.S."/>
            <person name="Ambrose K.D."/>
            <person name="Babbage A.K."/>
            <person name="Bagguley C.L."/>
            <person name="Bailey J."/>
            <person name="Banerjee R."/>
            <person name="Bates K."/>
            <person name="Beasley H."/>
            <person name="Bray-Allen S."/>
            <person name="Brown A.J."/>
            <person name="Brown J.Y."/>
            <person name="Burford D.C."/>
            <person name="Burrill W."/>
            <person name="Burton J."/>
            <person name="Cahill P."/>
            <person name="Camire D."/>
            <person name="Carter N.P."/>
            <person name="Chapman J.C."/>
            <person name="Clark S.Y."/>
            <person name="Clarke G."/>
            <person name="Clee C.M."/>
            <person name="Clegg S."/>
            <person name="Corby N."/>
            <person name="Coulson A."/>
            <person name="Dhami P."/>
            <person name="Dutta I."/>
            <person name="Dunn M."/>
            <person name="Faulkner L."/>
            <person name="Frankish A."/>
            <person name="Frankland J.A."/>
            <person name="Garner P."/>
            <person name="Garnett J."/>
            <person name="Gribble S."/>
            <person name="Griffiths C."/>
            <person name="Grocock R."/>
            <person name="Gustafson E."/>
            <person name="Hammond S."/>
            <person name="Harley J.L."/>
            <person name="Hart E."/>
            <person name="Heath P.D."/>
            <person name="Ho T.P."/>
            <person name="Hopkins B."/>
            <person name="Horne J."/>
            <person name="Howden P.J."/>
            <person name="Huckle E."/>
            <person name="Hynds C."/>
            <person name="Johnson C."/>
            <person name="Johnson D."/>
            <person name="Kana A."/>
            <person name="Kay M."/>
            <person name="Kimberley A.M."/>
            <person name="Kershaw J.K."/>
            <person name="Kokkinaki M."/>
            <person name="Laird G.K."/>
            <person name="Lawlor S."/>
            <person name="Lee H.M."/>
            <person name="Leongamornlert D.A."/>
            <person name="Laird G."/>
            <person name="Lloyd C."/>
            <person name="Lloyd D.M."/>
            <person name="Loveland J."/>
            <person name="Lovell J."/>
            <person name="McLaren S."/>
            <person name="McLay K.E."/>
            <person name="McMurray A."/>
            <person name="Mashreghi-Mohammadi M."/>
            <person name="Matthews L."/>
            <person name="Milne S."/>
            <person name="Nickerson T."/>
            <person name="Nguyen M."/>
            <person name="Overton-Larty E."/>
            <person name="Palmer S.A."/>
            <person name="Pearce A.V."/>
            <person name="Peck A.I."/>
            <person name="Pelan S."/>
            <person name="Phillimore B."/>
            <person name="Porter K."/>
            <person name="Rice C.M."/>
            <person name="Rogosin A."/>
            <person name="Ross M.T."/>
            <person name="Sarafidou T."/>
            <person name="Sehra H.K."/>
            <person name="Shownkeen R."/>
            <person name="Skuce C.D."/>
            <person name="Smith M."/>
            <person name="Standring L."/>
            <person name="Sycamore N."/>
            <person name="Tester J."/>
            <person name="Thorpe A."/>
            <person name="Torcasso W."/>
            <person name="Tracey A."/>
            <person name="Tromans A."/>
            <person name="Tsolas J."/>
            <person name="Wall M."/>
            <person name="Walsh J."/>
            <person name="Wang H."/>
            <person name="Weinstock K."/>
            <person name="West A.P."/>
            <person name="Willey D.L."/>
            <person name="Whitehead S.L."/>
            <person name="Wilming L."/>
            <person name="Wray P.W."/>
            <person name="Young L."/>
            <person name="Chen Y."/>
            <person name="Lovering R.C."/>
            <person name="Moschonas N.K."/>
            <person name="Siebert R."/>
            <person name="Fechtel K."/>
            <person name="Bentley D."/>
            <person name="Durbin R.M."/>
            <person name="Hubbard T."/>
            <person name="Doucette-Stamm L."/>
            <person name="Beck S."/>
            <person name="Smith D.R."/>
            <person name="Rogers J."/>
        </authorList>
    </citation>
    <scope>NUCLEOTIDE SEQUENCE [LARGE SCALE GENOMIC DNA]</scope>
</reference>
<reference key="5">
    <citation type="submission" date="2005-09" db="EMBL/GenBank/DDBJ databases">
        <authorList>
            <person name="Mural R.J."/>
            <person name="Istrail S."/>
            <person name="Sutton G.G."/>
            <person name="Florea L."/>
            <person name="Halpern A.L."/>
            <person name="Mobarry C.M."/>
            <person name="Lippert R."/>
            <person name="Walenz B."/>
            <person name="Shatkay H."/>
            <person name="Dew I."/>
            <person name="Miller J.R."/>
            <person name="Flanigan M.J."/>
            <person name="Edwards N.J."/>
            <person name="Bolanos R."/>
            <person name="Fasulo D."/>
            <person name="Halldorsson B.V."/>
            <person name="Hannenhalli S."/>
            <person name="Turner R."/>
            <person name="Yooseph S."/>
            <person name="Lu F."/>
            <person name="Nusskern D.R."/>
            <person name="Shue B.C."/>
            <person name="Zheng X.H."/>
            <person name="Zhong F."/>
            <person name="Delcher A.L."/>
            <person name="Huson D.H."/>
            <person name="Kravitz S.A."/>
            <person name="Mouchard L."/>
            <person name="Reinert K."/>
            <person name="Remington K.A."/>
            <person name="Clark A.G."/>
            <person name="Waterman M.S."/>
            <person name="Eichler E.E."/>
            <person name="Adams M.D."/>
            <person name="Hunkapiller M.W."/>
            <person name="Myers E.W."/>
            <person name="Venter J.C."/>
        </authorList>
    </citation>
    <scope>NUCLEOTIDE SEQUENCE [LARGE SCALE GENOMIC DNA]</scope>
</reference>
<reference key="6">
    <citation type="journal article" date="2004" name="Genome Res.">
        <title>The status, quality, and expansion of the NIH full-length cDNA project: the Mammalian Gene Collection (MGC).</title>
        <authorList>
            <consortium name="The MGC Project Team"/>
        </authorList>
    </citation>
    <scope>NUCLEOTIDE SEQUENCE [LARGE SCALE MRNA] (ISOFORM 1)</scope>
    <source>
        <tissue>Brain</tissue>
        <tissue>Uterus</tissue>
    </source>
</reference>
<reference key="7">
    <citation type="journal article" date="2011" name="BMC Syst. Biol.">
        <title>Initial characterization of the human central proteome.</title>
        <authorList>
            <person name="Burkard T.R."/>
            <person name="Planyavsky M."/>
            <person name="Kaupe I."/>
            <person name="Breitwieser F.P."/>
            <person name="Buerckstuemmer T."/>
            <person name="Bennett K.L."/>
            <person name="Superti-Furga G."/>
            <person name="Colinge J."/>
        </authorList>
    </citation>
    <scope>IDENTIFICATION BY MASS SPECTROMETRY [LARGE SCALE ANALYSIS]</scope>
</reference>
<reference key="8">
    <citation type="journal article" date="2024" name="Nature">
        <title>PTER is a N-acetyltaurine hydrolase that regulates feeding and obesity.</title>
        <authorList>
            <person name="Wei W."/>
            <person name="Lyu X."/>
            <person name="Markhard A.L."/>
            <person name="Fu S."/>
            <person name="Mardjuki R.E."/>
            <person name="Cavanagh P.E."/>
            <person name="Zeng X."/>
            <person name="Rajniak J."/>
            <person name="Lu N."/>
            <person name="Xiao S."/>
            <person name="Zhao M."/>
            <person name="Moya-Garzon M.D."/>
            <person name="Truong S.D."/>
            <person name="Chou J.C."/>
            <person name="Wat L.W."/>
            <person name="Chidambaranathan-Reghupaty S."/>
            <person name="Coassolo L."/>
            <person name="Xu D."/>
            <person name="Shen F."/>
            <person name="Huang W."/>
            <person name="Ramirez C.B."/>
            <person name="Jang C."/>
            <person name="Li L."/>
            <person name="Svensson K.J."/>
            <person name="Fischbach M.A."/>
            <person name="Long J.Z."/>
        </authorList>
    </citation>
    <scope>FUNCTION</scope>
    <scope>CATALYTIC ACTIVITY</scope>
</reference>
<name>PTER_HUMAN</name>